<comment type="subunit">
    <text evidence="1">Does not interact with CTNNB1.</text>
</comment>
<comment type="similarity">
    <text evidence="3">Belongs to the CTNNBIP1 family.</text>
</comment>
<evidence type="ECO:0000250" key="1"/>
<evidence type="ECO:0000255" key="2"/>
<evidence type="ECO:0000305" key="3"/>
<gene>
    <name type="primary">LZIC</name>
    <name type="ORF">RCJMB04_8o19</name>
</gene>
<protein>
    <recommendedName>
        <fullName>Protein LZIC</fullName>
    </recommendedName>
    <alternativeName>
        <fullName>Leucine zipper and CTNNBIP1 domain-containing protein</fullName>
    </alternativeName>
    <alternativeName>
        <fullName>Leucine zipper and ICAT homologous domain-containing protein</fullName>
    </alternativeName>
</protein>
<dbReference type="EMBL" id="AJ719972">
    <property type="protein sequence ID" value="CAG31631.1"/>
    <property type="molecule type" value="mRNA"/>
</dbReference>
<dbReference type="RefSeq" id="NP_001008450.1">
    <property type="nucleotide sequence ID" value="NM_001008450.2"/>
</dbReference>
<dbReference type="RefSeq" id="XP_015152377.1">
    <property type="nucleotide sequence ID" value="XM_015296891.4"/>
</dbReference>
<dbReference type="RefSeq" id="XP_015152378.1">
    <property type="nucleotide sequence ID" value="XM_015296892.4"/>
</dbReference>
<dbReference type="RefSeq" id="XP_024998288.1">
    <property type="nucleotide sequence ID" value="XM_025142520.3"/>
</dbReference>
<dbReference type="RefSeq" id="XP_024998289.1">
    <property type="nucleotide sequence ID" value="XM_025142521.3"/>
</dbReference>
<dbReference type="RefSeq" id="XP_040507103.1">
    <property type="nucleotide sequence ID" value="XM_040651169.2"/>
</dbReference>
<dbReference type="SMR" id="Q5ZKW2"/>
<dbReference type="FunCoup" id="Q5ZKW2">
    <property type="interactions" value="2581"/>
</dbReference>
<dbReference type="STRING" id="9031.ENSGALP00000004109"/>
<dbReference type="PaxDb" id="9031-ENSGALP00000004109"/>
<dbReference type="GeneID" id="419445"/>
<dbReference type="KEGG" id="gga:419445"/>
<dbReference type="CTD" id="84328"/>
<dbReference type="VEuPathDB" id="HostDB:geneid_419445"/>
<dbReference type="eggNOG" id="ENOG502QPUB">
    <property type="taxonomic scope" value="Eukaryota"/>
</dbReference>
<dbReference type="HOGENOM" id="CLU_091171_0_0_1"/>
<dbReference type="InParanoid" id="Q5ZKW2"/>
<dbReference type="OMA" id="TKMMAGN"/>
<dbReference type="OrthoDB" id="10262856at2759"/>
<dbReference type="PhylomeDB" id="Q5ZKW2"/>
<dbReference type="TreeFam" id="TF314533"/>
<dbReference type="PRO" id="PR:Q5ZKW2"/>
<dbReference type="Proteomes" id="UP000000539">
    <property type="component" value="Chromosome 21"/>
</dbReference>
<dbReference type="Bgee" id="ENSGALG00000002616">
    <property type="expression patterns" value="Expressed in spermatid and 14 other cell types or tissues"/>
</dbReference>
<dbReference type="GO" id="GO:0008013">
    <property type="term" value="F:beta-catenin binding"/>
    <property type="evidence" value="ECO:0007669"/>
    <property type="project" value="InterPro"/>
</dbReference>
<dbReference type="FunFam" id="1.10.10.490:FF:000002">
    <property type="entry name" value="protein LZIC isoform X1"/>
    <property type="match status" value="1"/>
</dbReference>
<dbReference type="Gene3D" id="1.10.10.490">
    <property type="entry name" value="Beta-catenin-interacting ICAT"/>
    <property type="match status" value="1"/>
</dbReference>
<dbReference type="InterPro" id="IPR009428">
    <property type="entry name" value="ICAT_dom"/>
</dbReference>
<dbReference type="InterPro" id="IPR036911">
    <property type="entry name" value="ICAT_sf"/>
</dbReference>
<dbReference type="PANTHER" id="PTHR47142">
    <property type="entry name" value="BETA-CATENIN-INTERACTING PROTEIN 1"/>
    <property type="match status" value="1"/>
</dbReference>
<dbReference type="PANTHER" id="PTHR47142:SF1">
    <property type="entry name" value="BETA-CATENIN-INTERACTING PROTEIN 1"/>
    <property type="match status" value="1"/>
</dbReference>
<dbReference type="Pfam" id="PF06384">
    <property type="entry name" value="ICAT"/>
    <property type="match status" value="1"/>
</dbReference>
<dbReference type="SUPFAM" id="SSF81730">
    <property type="entry name" value="beta-catenin-interacting protein ICAT"/>
    <property type="match status" value="1"/>
</dbReference>
<proteinExistence type="evidence at transcript level"/>
<keyword id="KW-0175">Coiled coil</keyword>
<keyword id="KW-1185">Reference proteome</keyword>
<accession>Q5ZKW2</accession>
<name>LZIC_CHICK</name>
<organism>
    <name type="scientific">Gallus gallus</name>
    <name type="common">Chicken</name>
    <dbReference type="NCBI Taxonomy" id="9031"/>
    <lineage>
        <taxon>Eukaryota</taxon>
        <taxon>Metazoa</taxon>
        <taxon>Chordata</taxon>
        <taxon>Craniata</taxon>
        <taxon>Vertebrata</taxon>
        <taxon>Euteleostomi</taxon>
        <taxon>Archelosauria</taxon>
        <taxon>Archosauria</taxon>
        <taxon>Dinosauria</taxon>
        <taxon>Saurischia</taxon>
        <taxon>Theropoda</taxon>
        <taxon>Coelurosauria</taxon>
        <taxon>Aves</taxon>
        <taxon>Neognathae</taxon>
        <taxon>Galloanserae</taxon>
        <taxon>Galliformes</taxon>
        <taxon>Phasianidae</taxon>
        <taxon>Phasianinae</taxon>
        <taxon>Gallus</taxon>
    </lineage>
</organism>
<reference key="1">
    <citation type="journal article" date="2005" name="Genome Biol.">
        <title>Full-length cDNAs from chicken bursal lymphocytes to facilitate gene function analysis.</title>
        <authorList>
            <person name="Caldwell R.B."/>
            <person name="Kierzek A.M."/>
            <person name="Arakawa H."/>
            <person name="Bezzubov Y."/>
            <person name="Zaim J."/>
            <person name="Fiedler P."/>
            <person name="Kutter S."/>
            <person name="Blagodatski A."/>
            <person name="Kostovska D."/>
            <person name="Koter M."/>
            <person name="Plachy J."/>
            <person name="Carninci P."/>
            <person name="Hayashizaki Y."/>
            <person name="Buerstedde J.-M."/>
        </authorList>
    </citation>
    <scope>NUCLEOTIDE SEQUENCE [LARGE SCALE MRNA]</scope>
    <source>
        <strain>CB</strain>
        <tissue>Bursa of Fabricius</tissue>
    </source>
</reference>
<feature type="chain" id="PRO_0000263694" description="Protein LZIC">
    <location>
        <begin position="1"/>
        <end position="190"/>
    </location>
</feature>
<feature type="coiled-coil region" evidence="2">
    <location>
        <begin position="6"/>
        <end position="64"/>
    </location>
</feature>
<sequence length="190" mass="21470">MASRGTTETSKLKQNLEEQLDRLMQQLQDLEECREELDADEYEETKKETLEQLSEINDSLKKIMSGDMTLVDELSGMQLAIQAAISQAFKTPEVIRMFAKKQPRQLRTRLAEMDRDLMVGKLGRDLYTQQKVEILTALRKLGEKLTQDDETFLSANAGAALSQFEKVSSDLGSGDKVFALASFEVEKAKQ</sequence>